<feature type="chain" id="PRO_1000018131" description="Arginine--tRNA ligase">
    <location>
        <begin position="1"/>
        <end position="563"/>
    </location>
</feature>
<feature type="short sequence motif" description="'HIGH' region">
    <location>
        <begin position="121"/>
        <end position="131"/>
    </location>
</feature>
<reference key="1">
    <citation type="journal article" date="2006" name="Proc. Natl. Acad. Sci. U.S.A.">
        <title>Molecular genetic anatomy of inter- and intraserotype variation in the human bacterial pathogen group A Streptococcus.</title>
        <authorList>
            <person name="Beres S.B."/>
            <person name="Richter E.W."/>
            <person name="Nagiec M.J."/>
            <person name="Sumby P."/>
            <person name="Porcella S.F."/>
            <person name="DeLeo F.R."/>
            <person name="Musser J.M."/>
        </authorList>
    </citation>
    <scope>NUCLEOTIDE SEQUENCE [LARGE SCALE GENOMIC DNA]</scope>
    <source>
        <strain>MGAS10750</strain>
    </source>
</reference>
<organism>
    <name type="scientific">Streptococcus pyogenes serotype M4 (strain MGAS10750)</name>
    <dbReference type="NCBI Taxonomy" id="370554"/>
    <lineage>
        <taxon>Bacteria</taxon>
        <taxon>Bacillati</taxon>
        <taxon>Bacillota</taxon>
        <taxon>Bacilli</taxon>
        <taxon>Lactobacillales</taxon>
        <taxon>Streptococcaceae</taxon>
        <taxon>Streptococcus</taxon>
    </lineage>
</organism>
<gene>
    <name evidence="1" type="primary">argS</name>
    <name type="ordered locus">MGAS10750_Spy1925</name>
</gene>
<proteinExistence type="inferred from homology"/>
<name>SYR_STRPF</name>
<protein>
    <recommendedName>
        <fullName evidence="1">Arginine--tRNA ligase</fullName>
        <ecNumber evidence="1">6.1.1.19</ecNumber>
    </recommendedName>
    <alternativeName>
        <fullName evidence="1">Arginyl-tRNA synthetase</fullName>
        <shortName evidence="1">ArgRS</shortName>
    </alternativeName>
</protein>
<keyword id="KW-0030">Aminoacyl-tRNA synthetase</keyword>
<keyword id="KW-0067">ATP-binding</keyword>
<keyword id="KW-0963">Cytoplasm</keyword>
<keyword id="KW-0436">Ligase</keyword>
<keyword id="KW-0547">Nucleotide-binding</keyword>
<keyword id="KW-0648">Protein biosynthesis</keyword>
<sequence>MDTKTLIASEIAKVVPELEQDAIFNLLETPKNSDMGDLAFPAFSLAKVLRKAPQMIASELAEQIDESQFEKVVAVGPYINFFLDKAKISSQVLEQVITAGSDYAQQDEGQGRNVAIDMSSPNIAKPFSIGHLRSTVIGDSLAHIFAKMGYQPVKINHLGDWGKQFGMLIVAYKKWGDEAAVQAHPIDELLKLYVRINAEAETDPTVDEEAREWFRKLEDGDKEATELWQWFRDESLLEFNRLYDQLHVTFDSYNGEAFYNDKMDEVLELLEAKNLLVESKGAQVVNLEKYGIEHPALIKKSDGATLYITRDLAAALYRKRTYDFAKSVYVVGNEQAAHFKQLKAVLQEMGYDWSDDMTHVAFGLVTKGGAKLSTRKGNVILLEPTVAEAINRAASQIEAKNPNLADKEAVAHAVGVGAIKFYDLKTDRMNGYDFDLETMVSFEGETGPYVQYAHARIQSILRKADFTPSATTTYSLADAESWEIIKLIQDFPRIIKRTSDNFEPSIMAKFAINLAQSFNKYYAHTRILDDNSERDNRLALCYATATVLKEALRLLGVDAPNEM</sequence>
<dbReference type="EC" id="6.1.1.19" evidence="1"/>
<dbReference type="EMBL" id="CP000262">
    <property type="protein sequence ID" value="ABF38875.1"/>
    <property type="molecule type" value="Genomic_DNA"/>
</dbReference>
<dbReference type="SMR" id="Q1J486"/>
<dbReference type="KEGG" id="spi:MGAS10750_Spy1925"/>
<dbReference type="HOGENOM" id="CLU_006406_6_1_9"/>
<dbReference type="Proteomes" id="UP000002434">
    <property type="component" value="Chromosome"/>
</dbReference>
<dbReference type="GO" id="GO:0005737">
    <property type="term" value="C:cytoplasm"/>
    <property type="evidence" value="ECO:0007669"/>
    <property type="project" value="UniProtKB-SubCell"/>
</dbReference>
<dbReference type="GO" id="GO:0004814">
    <property type="term" value="F:arginine-tRNA ligase activity"/>
    <property type="evidence" value="ECO:0007669"/>
    <property type="project" value="UniProtKB-UniRule"/>
</dbReference>
<dbReference type="GO" id="GO:0005524">
    <property type="term" value="F:ATP binding"/>
    <property type="evidence" value="ECO:0007669"/>
    <property type="project" value="UniProtKB-UniRule"/>
</dbReference>
<dbReference type="GO" id="GO:0006420">
    <property type="term" value="P:arginyl-tRNA aminoacylation"/>
    <property type="evidence" value="ECO:0007669"/>
    <property type="project" value="UniProtKB-UniRule"/>
</dbReference>
<dbReference type="CDD" id="cd07956">
    <property type="entry name" value="Anticodon_Ia_Arg"/>
    <property type="match status" value="1"/>
</dbReference>
<dbReference type="CDD" id="cd00671">
    <property type="entry name" value="ArgRS_core"/>
    <property type="match status" value="1"/>
</dbReference>
<dbReference type="FunFam" id="3.40.50.620:FF:000116">
    <property type="entry name" value="Arginine--tRNA ligase"/>
    <property type="match status" value="1"/>
</dbReference>
<dbReference type="FunFam" id="1.10.730.10:FF:000006">
    <property type="entry name" value="Arginyl-tRNA synthetase 2, mitochondrial"/>
    <property type="match status" value="1"/>
</dbReference>
<dbReference type="Gene3D" id="3.30.1360.70">
    <property type="entry name" value="Arginyl tRNA synthetase N-terminal domain"/>
    <property type="match status" value="1"/>
</dbReference>
<dbReference type="Gene3D" id="3.40.50.620">
    <property type="entry name" value="HUPs"/>
    <property type="match status" value="1"/>
</dbReference>
<dbReference type="Gene3D" id="1.10.730.10">
    <property type="entry name" value="Isoleucyl-tRNA Synthetase, Domain 1"/>
    <property type="match status" value="1"/>
</dbReference>
<dbReference type="HAMAP" id="MF_00123">
    <property type="entry name" value="Arg_tRNA_synth"/>
    <property type="match status" value="1"/>
</dbReference>
<dbReference type="InterPro" id="IPR001278">
    <property type="entry name" value="Arg-tRNA-ligase"/>
</dbReference>
<dbReference type="InterPro" id="IPR005148">
    <property type="entry name" value="Arg-tRNA-synth_N"/>
</dbReference>
<dbReference type="InterPro" id="IPR036695">
    <property type="entry name" value="Arg-tRNA-synth_N_sf"/>
</dbReference>
<dbReference type="InterPro" id="IPR035684">
    <property type="entry name" value="ArgRS_core"/>
</dbReference>
<dbReference type="InterPro" id="IPR008909">
    <property type="entry name" value="DALR_anticod-bd"/>
</dbReference>
<dbReference type="InterPro" id="IPR014729">
    <property type="entry name" value="Rossmann-like_a/b/a_fold"/>
</dbReference>
<dbReference type="InterPro" id="IPR009080">
    <property type="entry name" value="tRNAsynth_Ia_anticodon-bd"/>
</dbReference>
<dbReference type="NCBIfam" id="TIGR00456">
    <property type="entry name" value="argS"/>
    <property type="match status" value="1"/>
</dbReference>
<dbReference type="PANTHER" id="PTHR11956:SF5">
    <property type="entry name" value="ARGININE--TRNA LIGASE, CYTOPLASMIC"/>
    <property type="match status" value="1"/>
</dbReference>
<dbReference type="PANTHER" id="PTHR11956">
    <property type="entry name" value="ARGINYL-TRNA SYNTHETASE"/>
    <property type="match status" value="1"/>
</dbReference>
<dbReference type="Pfam" id="PF03485">
    <property type="entry name" value="Arg_tRNA_synt_N"/>
    <property type="match status" value="1"/>
</dbReference>
<dbReference type="Pfam" id="PF05746">
    <property type="entry name" value="DALR_1"/>
    <property type="match status" value="1"/>
</dbReference>
<dbReference type="Pfam" id="PF00750">
    <property type="entry name" value="tRNA-synt_1d"/>
    <property type="match status" value="1"/>
</dbReference>
<dbReference type="PRINTS" id="PR01038">
    <property type="entry name" value="TRNASYNTHARG"/>
</dbReference>
<dbReference type="SMART" id="SM01016">
    <property type="entry name" value="Arg_tRNA_synt_N"/>
    <property type="match status" value="1"/>
</dbReference>
<dbReference type="SMART" id="SM00836">
    <property type="entry name" value="DALR_1"/>
    <property type="match status" value="1"/>
</dbReference>
<dbReference type="SUPFAM" id="SSF47323">
    <property type="entry name" value="Anticodon-binding domain of a subclass of class I aminoacyl-tRNA synthetases"/>
    <property type="match status" value="1"/>
</dbReference>
<dbReference type="SUPFAM" id="SSF55190">
    <property type="entry name" value="Arginyl-tRNA synthetase (ArgRS), N-terminal 'additional' domain"/>
    <property type="match status" value="1"/>
</dbReference>
<dbReference type="SUPFAM" id="SSF52374">
    <property type="entry name" value="Nucleotidylyl transferase"/>
    <property type="match status" value="1"/>
</dbReference>
<evidence type="ECO:0000255" key="1">
    <source>
        <dbReference type="HAMAP-Rule" id="MF_00123"/>
    </source>
</evidence>
<accession>Q1J486</accession>
<comment type="catalytic activity">
    <reaction evidence="1">
        <text>tRNA(Arg) + L-arginine + ATP = L-arginyl-tRNA(Arg) + AMP + diphosphate</text>
        <dbReference type="Rhea" id="RHEA:20301"/>
        <dbReference type="Rhea" id="RHEA-COMP:9658"/>
        <dbReference type="Rhea" id="RHEA-COMP:9673"/>
        <dbReference type="ChEBI" id="CHEBI:30616"/>
        <dbReference type="ChEBI" id="CHEBI:32682"/>
        <dbReference type="ChEBI" id="CHEBI:33019"/>
        <dbReference type="ChEBI" id="CHEBI:78442"/>
        <dbReference type="ChEBI" id="CHEBI:78513"/>
        <dbReference type="ChEBI" id="CHEBI:456215"/>
        <dbReference type="EC" id="6.1.1.19"/>
    </reaction>
</comment>
<comment type="subunit">
    <text evidence="1">Monomer.</text>
</comment>
<comment type="subcellular location">
    <subcellularLocation>
        <location evidence="1">Cytoplasm</location>
    </subcellularLocation>
</comment>
<comment type="similarity">
    <text evidence="1">Belongs to the class-I aminoacyl-tRNA synthetase family.</text>
</comment>